<organism>
    <name type="scientific">Aipysurus laevis</name>
    <name type="common">Olive sea snake</name>
    <dbReference type="NCBI Taxonomy" id="8678"/>
    <lineage>
        <taxon>Eukaryota</taxon>
        <taxon>Metazoa</taxon>
        <taxon>Chordata</taxon>
        <taxon>Craniata</taxon>
        <taxon>Vertebrata</taxon>
        <taxon>Euteleostomi</taxon>
        <taxon>Lepidosauria</taxon>
        <taxon>Squamata</taxon>
        <taxon>Bifurcata</taxon>
        <taxon>Unidentata</taxon>
        <taxon>Episquamata</taxon>
        <taxon>Toxicofera</taxon>
        <taxon>Serpentes</taxon>
        <taxon>Colubroidea</taxon>
        <taxon>Elapidae</taxon>
        <taxon>Hydrophiinae</taxon>
        <taxon>Aipysurus</taxon>
    </lineage>
</organism>
<protein>
    <recommendedName>
        <fullName>Short neurotoxin C</fullName>
    </recommendedName>
</protein>
<proteinExistence type="evidence at protein level"/>
<name>3S13_AIPLA</name>
<sequence>LTCCNQQSSQPKTTTDCADNSCYKKTWKDHRGTRIERGCGCPQVKPGIKLECCKTNECNN</sequence>
<keyword id="KW-0008">Acetylcholine receptor inhibiting toxin</keyword>
<keyword id="KW-0903">Direct protein sequencing</keyword>
<keyword id="KW-1015">Disulfide bond</keyword>
<keyword id="KW-0872">Ion channel impairing toxin</keyword>
<keyword id="KW-0528">Neurotoxin</keyword>
<keyword id="KW-0629">Postsynaptic neurotoxin</keyword>
<keyword id="KW-0964">Secreted</keyword>
<keyword id="KW-0800">Toxin</keyword>
<feature type="chain" id="PRO_0000093567" description="Short neurotoxin C" evidence="3">
    <location>
        <begin position="1"/>
        <end position="60"/>
    </location>
</feature>
<feature type="disulfide bond" evidence="1">
    <location>
        <begin position="3"/>
        <end position="22"/>
    </location>
</feature>
<feature type="disulfide bond" evidence="1">
    <location>
        <begin position="17"/>
        <end position="39"/>
    </location>
</feature>
<feature type="disulfide bond" evidence="1">
    <location>
        <begin position="41"/>
        <end position="52"/>
    </location>
</feature>
<feature type="disulfide bond" evidence="1">
    <location>
        <begin position="53"/>
        <end position="58"/>
    </location>
</feature>
<comment type="function">
    <text evidence="2">Binds to muscle nicotinic acetylcholine receptor (nAChR) and inhibit acetylcholine from binding to the receptor, thereby impairing neuromuscular transmission.</text>
</comment>
<comment type="subcellular location">
    <subcellularLocation>
        <location evidence="3">Secreted</location>
    </subcellularLocation>
</comment>
<comment type="tissue specificity">
    <text evidence="4">Expressed by the venom gland.</text>
</comment>
<comment type="toxic dose">
    <text evidence="3">LD(50) is 0.076 mg/kg by intramuscular injection into mice.</text>
</comment>
<comment type="similarity">
    <text evidence="4">Belongs to the three-finger toxin family. Short-chain subfamily. Type I alpha-neurotoxin sub-subfamily.</text>
</comment>
<dbReference type="SMR" id="P19958"/>
<dbReference type="GO" id="GO:0005576">
    <property type="term" value="C:extracellular region"/>
    <property type="evidence" value="ECO:0007669"/>
    <property type="project" value="UniProtKB-SubCell"/>
</dbReference>
<dbReference type="GO" id="GO:0030550">
    <property type="term" value="F:acetylcholine receptor inhibitor activity"/>
    <property type="evidence" value="ECO:0007669"/>
    <property type="project" value="UniProtKB-KW"/>
</dbReference>
<dbReference type="GO" id="GO:0099106">
    <property type="term" value="F:ion channel regulator activity"/>
    <property type="evidence" value="ECO:0007669"/>
    <property type="project" value="UniProtKB-KW"/>
</dbReference>
<dbReference type="GO" id="GO:0090729">
    <property type="term" value="F:toxin activity"/>
    <property type="evidence" value="ECO:0007669"/>
    <property type="project" value="UniProtKB-KW"/>
</dbReference>
<dbReference type="CDD" id="cd00206">
    <property type="entry name" value="TFP_snake_toxin"/>
    <property type="match status" value="1"/>
</dbReference>
<dbReference type="FunFam" id="2.10.60.10:FF:000024">
    <property type="entry name" value="Cytotoxin 1"/>
    <property type="match status" value="1"/>
</dbReference>
<dbReference type="Gene3D" id="2.10.60.10">
    <property type="entry name" value="CD59"/>
    <property type="match status" value="1"/>
</dbReference>
<dbReference type="InterPro" id="IPR003571">
    <property type="entry name" value="Snake_3FTx"/>
</dbReference>
<dbReference type="InterPro" id="IPR045860">
    <property type="entry name" value="Snake_toxin-like_sf"/>
</dbReference>
<dbReference type="InterPro" id="IPR018354">
    <property type="entry name" value="Snake_toxin_con_site"/>
</dbReference>
<dbReference type="InterPro" id="IPR054131">
    <property type="entry name" value="Toxin_cobra-type"/>
</dbReference>
<dbReference type="Pfam" id="PF21947">
    <property type="entry name" value="Toxin_cobra-type"/>
    <property type="match status" value="1"/>
</dbReference>
<dbReference type="SUPFAM" id="SSF57302">
    <property type="entry name" value="Snake toxin-like"/>
    <property type="match status" value="1"/>
</dbReference>
<dbReference type="PROSITE" id="PS00272">
    <property type="entry name" value="SNAKE_TOXIN"/>
    <property type="match status" value="1"/>
</dbReference>
<reference key="1">
    <citation type="journal article" date="1976" name="Biochem. J.">
        <title>Isolation, properties and amino acid sequences of three neurotoxins from the venom of a sea snake, Aipysurus laevis.</title>
        <authorList>
            <person name="Maeda N."/>
            <person name="Tamiya N."/>
        </authorList>
    </citation>
    <scope>PROTEIN SEQUENCE</scope>
    <scope>TOXIC DOSE</scope>
    <scope>SUBCELLULAR LOCATION</scope>
    <source>
        <tissue>Venom</tissue>
    </source>
</reference>
<evidence type="ECO:0000250" key="1">
    <source>
        <dbReference type="UniProtKB" id="P0C1Z0"/>
    </source>
</evidence>
<evidence type="ECO:0000250" key="2">
    <source>
        <dbReference type="UniProtKB" id="P60775"/>
    </source>
</evidence>
<evidence type="ECO:0000269" key="3">
    <source>
    </source>
</evidence>
<evidence type="ECO:0000305" key="4"/>
<accession>P19958</accession>
<accession>P01439</accession>